<keyword id="KW-0158">Chromosome</keyword>
<keyword id="KW-0238">DNA-binding</keyword>
<keyword id="KW-0460">Magnesium</keyword>
<keyword id="KW-0479">Metal-binding</keyword>
<keyword id="KW-0548">Nucleotidyltransferase</keyword>
<keyword id="KW-0539">Nucleus</keyword>
<keyword id="KW-1185">Reference proteome</keyword>
<keyword id="KW-0695">RNA-directed DNA polymerase</keyword>
<keyword id="KW-0779">Telomere</keyword>
<keyword id="KW-0808">Transferase</keyword>
<accession>Q8LKW0</accession>
<accession>Q2QTI2</accession>
<accession>Q9AU13</accession>
<proteinExistence type="evidence at transcript level"/>
<comment type="function">
    <text evidence="1">Telomerase is a ribonucleoprotein enzyme essential for the replication of chromosome termini in most eukaryotes. It elongates telomeres. It is a reverse transcriptase that adds simple sequence repeats to chromosome ends by copying a template sequence within the RNA component of the enzyme (By similarity).</text>
</comment>
<comment type="catalytic activity">
    <reaction evidence="2">
        <text>DNA(n) + a 2'-deoxyribonucleoside 5'-triphosphate = DNA(n+1) + diphosphate</text>
        <dbReference type="Rhea" id="RHEA:22508"/>
        <dbReference type="Rhea" id="RHEA-COMP:17339"/>
        <dbReference type="Rhea" id="RHEA-COMP:17340"/>
        <dbReference type="ChEBI" id="CHEBI:33019"/>
        <dbReference type="ChEBI" id="CHEBI:61560"/>
        <dbReference type="ChEBI" id="CHEBI:173112"/>
        <dbReference type="EC" id="2.7.7.49"/>
    </reaction>
</comment>
<comment type="subunit">
    <text evidence="5">Component of the telomerase ribonucleoprotein complex.</text>
</comment>
<comment type="subcellular location">
    <subcellularLocation>
        <location evidence="1">Nucleus</location>
    </subcellularLocation>
    <subcellularLocation>
        <location evidence="1">Chromosome</location>
        <location evidence="1">Telomere</location>
    </subcellularLocation>
</comment>
<comment type="tissue specificity">
    <text evidence="3 4">Expressed in shoot apices and immature embryos.</text>
</comment>
<comment type="similarity">
    <text evidence="5">Belongs to the reverse transcriptase family. Telomerase subfamily.</text>
</comment>
<comment type="sequence caution" evidence="5">
    <conflict type="frameshift">
        <sequence resource="EMBL-CDS" id="AAM21641"/>
    </conflict>
</comment>
<sequence length="1259" mass="143607">MPRRRRRRRAAPGGQVPPELRLAYGARALTLGRAVFSLLPSPRHCESPCPACRGRVASGCLACRRWEHLLRDGDPVAYRRLITRAVCAIAADDLSAPPPPRYTPGNSGHSQARLVREMMKSIVADQSHGTKNVLCNGLHEGGQSICISDLVSSSSWSILLHRIGDLLMCYLLRCTSIFLPVKKNDYFQVSGVPLNVVLRNPIFASTVARKHQPQTTKAKCHTCYLWKSANMAENLSICHDSSNSGVNSSFSSTCKIVTQQSCETCGSIRRAESKDPSEGCNCPKFPSDGRSGECCNCYTHNTRKRKRLYSWQRRSKKKQVCSVDESSAEWSKLNGSNFNMSNGPSENLAGKMNDQAQSVELTVDNTSLARSNDDSSSEIKVINATILSSEKSPCSVFDIRGSQGLSCHYSLSEVQYQSTCPQVGPSSYLHLNSCSICFNCIISNASKHLSLDSLISRNGIFYNRRTTYSVFHCKHILSKRKRPDALSLVKHIFGINSCCASLLKYNCHESTIRKSNCLCCWLPKSIKNLIRNSKRCQYKKLFLKHCSVKCKVAPDVTKNDGKAHYPPGGKAAYYDRSFSRLEAYSTHQQVASFVWAVLKRIVPKPLLGNSFGKRSLRTNIWKFIKLRRFETFQLSDCIGDLKVSHYSWLSNIEFSNCFCSAIIGKQTGSSTSAEEQKQKNILHCWISWLFSDIVIPVVRTYFYVTERESKRYDVFYYPKSVWRDLTSNAIASLNKKNFRILRGEPRKAVRHLNCSSRVRFLPKAKDMRPLVDLRAKSKDANLNKCHLIMKKLRDEKPEMFGSSVFDYNNVHQNLSQFISSKRSQLMKKLKVYIVVADVSKAFDCVSHDMVLKMIDDAFKCDEYTVRKCSKVICNRSKNSLYRFDSNASIGNGNSIYDLSIQLSSGGGIFVDQGTICRILKEQFHHLLYEQIKCNILKIGQKYYLQQVGIAQGSKLSPNLCSLYYGHLENSVLSKFLHDSKLNAGEAFSEPEYLLMRFIDDFIFISFSLEHAQKFLNRMRRGFVFYNCYMNDSKYGFNFCAGNSEPSSNRLYRGDDGVSFMPWSGLLINCETLEIQADYTRYLDITIISTITVKMHSSTKYIHSKLCHYMRPKCHPIFYDSNINSPGTIRVNIYQAFLLCAMKFHCYIRSVSDANVSKLELLQVIKRTFRYMHSLIVRRMQDVELHYNVRPVLKLRRKETIWLGLTAYIRVLQQKQSRYKDMLTLLTAELGRYCHLGHECDTLRYAVDDSHSSMFWKFKF</sequence>
<evidence type="ECO:0000250" key="1"/>
<evidence type="ECO:0000255" key="2">
    <source>
        <dbReference type="PROSITE-ProRule" id="PRU00405"/>
    </source>
</evidence>
<evidence type="ECO:0000269" key="3">
    <source>
    </source>
</evidence>
<evidence type="ECO:0000269" key="4">
    <source>
    </source>
</evidence>
<evidence type="ECO:0000305" key="5"/>
<feature type="chain" id="PRO_0000054930" description="Telomerase reverse transcriptase">
    <location>
        <begin position="1"/>
        <end position="1259"/>
    </location>
</feature>
<feature type="domain" description="Reverse transcriptase" evidence="2">
    <location>
        <begin position="742"/>
        <end position="1067"/>
    </location>
</feature>
<feature type="binding site" evidence="2">
    <location>
        <position position="837"/>
    </location>
    <ligand>
        <name>Mg(2+)</name>
        <dbReference type="ChEBI" id="CHEBI:18420"/>
        <note>catalytic</note>
    </ligand>
</feature>
<feature type="binding site" evidence="2">
    <location>
        <position position="999"/>
    </location>
    <ligand>
        <name>Mg(2+)</name>
        <dbReference type="ChEBI" id="CHEBI:18420"/>
        <note>catalytic</note>
    </ligand>
</feature>
<feature type="binding site" evidence="2">
    <location>
        <position position="1000"/>
    </location>
    <ligand>
        <name>Mg(2+)</name>
        <dbReference type="ChEBI" id="CHEBI:18420"/>
        <note>catalytic</note>
    </ligand>
</feature>
<feature type="sequence conflict" description="In Ref. 1; AAK35007." evidence="5" ref="1">
    <original>A</original>
    <variation>T</variation>
    <location>
        <position position="34"/>
    </location>
</feature>
<feature type="sequence conflict" description="In Ref. 1; AAK35007." evidence="5" ref="1">
    <original>V</original>
    <variation>I</variation>
    <location>
        <position position="76"/>
    </location>
</feature>
<feature type="sequence conflict" description="In Ref. 1; AAK35007." evidence="5" ref="1">
    <original>S</original>
    <variation>F</variation>
    <location>
        <position position="610"/>
    </location>
</feature>
<feature type="sequence conflict" description="In Ref. 1; AAK35007." evidence="5" ref="1">
    <original>K</original>
    <variation>E</variation>
    <location>
        <position position="677"/>
    </location>
</feature>
<gene>
    <name type="primary">TERT</name>
    <name type="ordered locus">Os12g0293100</name>
    <name type="ordered locus">LOC_Os12g19549</name>
</gene>
<protein>
    <recommendedName>
        <fullName>Telomerase reverse transcriptase</fullName>
        <ecNumber>2.7.7.49</ecNumber>
    </recommendedName>
    <alternativeName>
        <fullName>OsTERT</fullName>
    </alternativeName>
</protein>
<organism>
    <name type="scientific">Oryza sativa subsp. japonica</name>
    <name type="common">Rice</name>
    <dbReference type="NCBI Taxonomy" id="39947"/>
    <lineage>
        <taxon>Eukaryota</taxon>
        <taxon>Viridiplantae</taxon>
        <taxon>Streptophyta</taxon>
        <taxon>Embryophyta</taxon>
        <taxon>Tracheophyta</taxon>
        <taxon>Spermatophyta</taxon>
        <taxon>Magnoliopsida</taxon>
        <taxon>Liliopsida</taxon>
        <taxon>Poales</taxon>
        <taxon>Poaceae</taxon>
        <taxon>BOP clade</taxon>
        <taxon>Oryzoideae</taxon>
        <taxon>Oryzeae</taxon>
        <taxon>Oryzinae</taxon>
        <taxon>Oryza</taxon>
        <taxon>Oryza sativa</taxon>
    </lineage>
</organism>
<dbReference type="EC" id="2.7.7.49"/>
<dbReference type="EMBL" id="AF288216">
    <property type="protein sequence ID" value="AAK35007.1"/>
    <property type="molecule type" value="mRNA"/>
</dbReference>
<dbReference type="EMBL" id="AF494453">
    <property type="protein sequence ID" value="AAM21641.1"/>
    <property type="status" value="ALT_FRAME"/>
    <property type="molecule type" value="Genomic_DNA"/>
</dbReference>
<dbReference type="EMBL" id="DP000011">
    <property type="protein sequence ID" value="ABA97494.2"/>
    <property type="molecule type" value="Genomic_DNA"/>
</dbReference>
<dbReference type="EMBL" id="AP008218">
    <property type="protein sequence ID" value="BAF29629.1"/>
    <property type="molecule type" value="Genomic_DNA"/>
</dbReference>
<dbReference type="EMBL" id="AP014968">
    <property type="status" value="NOT_ANNOTATED_CDS"/>
    <property type="molecule type" value="Genomic_DNA"/>
</dbReference>
<dbReference type="RefSeq" id="XP_015620285.1">
    <property type="nucleotide sequence ID" value="XM_015764799.1"/>
</dbReference>
<dbReference type="SMR" id="Q8LKW0"/>
<dbReference type="FunCoup" id="Q8LKW0">
    <property type="interactions" value="143"/>
</dbReference>
<dbReference type="STRING" id="39947.Q8LKW0"/>
<dbReference type="PaxDb" id="39947-Q8LKW0"/>
<dbReference type="EnsemblPlants" id="Os12t0293100-02">
    <property type="protein sequence ID" value="Os12t0293100-02"/>
    <property type="gene ID" value="Os12g0293100"/>
</dbReference>
<dbReference type="Gramene" id="Os12t0293100-02">
    <property type="protein sequence ID" value="Os12t0293100-02"/>
    <property type="gene ID" value="Os12g0293100"/>
</dbReference>
<dbReference type="KEGG" id="dosa:Os12g0293100"/>
<dbReference type="eggNOG" id="KOG1005">
    <property type="taxonomic scope" value="Eukaryota"/>
</dbReference>
<dbReference type="HOGENOM" id="CLU_710601_0_0_1"/>
<dbReference type="InParanoid" id="Q8LKW0"/>
<dbReference type="OrthoDB" id="289721at2759"/>
<dbReference type="Proteomes" id="UP000000763">
    <property type="component" value="Chromosome 12"/>
</dbReference>
<dbReference type="Proteomes" id="UP000059680">
    <property type="component" value="Chromosome 12"/>
</dbReference>
<dbReference type="GO" id="GO:0000781">
    <property type="term" value="C:chromosome, telomeric region"/>
    <property type="evidence" value="ECO:0007669"/>
    <property type="project" value="UniProtKB-SubCell"/>
</dbReference>
<dbReference type="GO" id="GO:0000333">
    <property type="term" value="C:telomerase catalytic core complex"/>
    <property type="evidence" value="ECO:0000318"/>
    <property type="project" value="GO_Central"/>
</dbReference>
<dbReference type="GO" id="GO:0046872">
    <property type="term" value="F:metal ion binding"/>
    <property type="evidence" value="ECO:0007669"/>
    <property type="project" value="UniProtKB-KW"/>
</dbReference>
<dbReference type="GO" id="GO:0003720">
    <property type="term" value="F:telomerase activity"/>
    <property type="evidence" value="ECO:0000318"/>
    <property type="project" value="GO_Central"/>
</dbReference>
<dbReference type="GO" id="GO:0070034">
    <property type="term" value="F:telomerase RNA binding"/>
    <property type="evidence" value="ECO:0000318"/>
    <property type="project" value="GO_Central"/>
</dbReference>
<dbReference type="GO" id="GO:0042162">
    <property type="term" value="F:telomeric DNA binding"/>
    <property type="evidence" value="ECO:0000318"/>
    <property type="project" value="GO_Central"/>
</dbReference>
<dbReference type="GO" id="GO:0007004">
    <property type="term" value="P:telomere maintenance via telomerase"/>
    <property type="evidence" value="ECO:0000318"/>
    <property type="project" value="GO_Central"/>
</dbReference>
<dbReference type="CDD" id="cd01648">
    <property type="entry name" value="TERT"/>
    <property type="match status" value="1"/>
</dbReference>
<dbReference type="FunFam" id="1.10.357.90:FF:000002">
    <property type="entry name" value="Telomerase reverse transcriptase"/>
    <property type="match status" value="1"/>
</dbReference>
<dbReference type="FunFam" id="3.30.70.2630:FF:000002">
    <property type="entry name" value="Telomerase reverse transcriptase"/>
    <property type="match status" value="1"/>
</dbReference>
<dbReference type="Gene3D" id="1.10.132.70">
    <property type="match status" value="1"/>
</dbReference>
<dbReference type="Gene3D" id="1.10.357.90">
    <property type="match status" value="1"/>
</dbReference>
<dbReference type="Gene3D" id="3.30.70.2630">
    <property type="match status" value="1"/>
</dbReference>
<dbReference type="Gene3D" id="1.10.10.1970">
    <property type="entry name" value="TERT catalytic subunit-like"/>
    <property type="match status" value="1"/>
</dbReference>
<dbReference type="InterPro" id="IPR043502">
    <property type="entry name" value="DNA/RNA_pol_sf"/>
</dbReference>
<dbReference type="InterPro" id="IPR000477">
    <property type="entry name" value="RT_dom"/>
</dbReference>
<dbReference type="InterPro" id="IPR021891">
    <property type="entry name" value="Telomerase_RBD"/>
</dbReference>
<dbReference type="InterPro" id="IPR003545">
    <property type="entry name" value="Telomerase_RT"/>
</dbReference>
<dbReference type="InterPro" id="IPR049139">
    <property type="entry name" value="TERT_C"/>
</dbReference>
<dbReference type="PANTHER" id="PTHR12066">
    <property type="entry name" value="TELOMERASE REVERSE TRANSCRIPTASE"/>
    <property type="match status" value="1"/>
</dbReference>
<dbReference type="PANTHER" id="PTHR12066:SF0">
    <property type="entry name" value="TELOMERASE REVERSE TRANSCRIPTASE"/>
    <property type="match status" value="1"/>
</dbReference>
<dbReference type="Pfam" id="PF12009">
    <property type="entry name" value="Telomerase_RBD"/>
    <property type="match status" value="1"/>
</dbReference>
<dbReference type="Pfam" id="PF21399">
    <property type="entry name" value="TERT_C"/>
    <property type="match status" value="1"/>
</dbReference>
<dbReference type="PRINTS" id="PR01365">
    <property type="entry name" value="TELOMERASERT"/>
</dbReference>
<dbReference type="SMART" id="SM00975">
    <property type="entry name" value="Telomerase_RBD"/>
    <property type="match status" value="1"/>
</dbReference>
<dbReference type="SUPFAM" id="SSF56672">
    <property type="entry name" value="DNA/RNA polymerases"/>
    <property type="match status" value="1"/>
</dbReference>
<dbReference type="PROSITE" id="PS00527">
    <property type="entry name" value="RIBOSOMAL_S14"/>
    <property type="match status" value="1"/>
</dbReference>
<dbReference type="PROSITE" id="PS50878">
    <property type="entry name" value="RT_POL"/>
    <property type="match status" value="1"/>
</dbReference>
<name>TERT_ORYSJ</name>
<reference key="1">
    <citation type="journal article" date="2004" name="Gene">
        <title>Characterization of Oryza sativa telomerase reverse transcriptase and possible role of its phosphorylation in the control of telomerase activity.</title>
        <authorList>
            <person name="Oguchi K."/>
            <person name="Tamura K."/>
            <person name="Takahashi H."/>
        </authorList>
    </citation>
    <scope>NUCLEOTIDE SEQUENCE [MRNA]</scope>
    <scope>TISSUE SPECIFICITY</scope>
    <source>
        <tissue>Leaf</tissue>
    </source>
</reference>
<reference key="2">
    <citation type="journal article" date="2002" name="Plant J.">
        <title>Cloning and characterization of rice (Oryza sativa L) telomerase reverse transcriptase, which reveals complex splicing patterns.</title>
        <authorList>
            <person name="Heller-Uszynska K."/>
            <person name="Schnippenkoetter W."/>
            <person name="Kilian A."/>
        </authorList>
    </citation>
    <scope>NUCLEOTIDE SEQUENCE [GENOMIC DNA]</scope>
    <scope>TISSUE SPECIFICITY</scope>
    <source>
        <strain>cv. Nipponbare</strain>
    </source>
</reference>
<reference key="3">
    <citation type="journal article" date="2005" name="BMC Biol.">
        <title>The sequence of rice chromosomes 11 and 12, rich in disease resistance genes and recent gene duplications.</title>
        <authorList>
            <consortium name="The rice chromosomes 11 and 12 sequencing consortia"/>
        </authorList>
    </citation>
    <scope>NUCLEOTIDE SEQUENCE [LARGE SCALE GENOMIC DNA]</scope>
    <source>
        <strain>cv. Nipponbare</strain>
    </source>
</reference>
<reference key="4">
    <citation type="journal article" date="2005" name="Nature">
        <title>The map-based sequence of the rice genome.</title>
        <authorList>
            <consortium name="International rice genome sequencing project (IRGSP)"/>
        </authorList>
    </citation>
    <scope>NUCLEOTIDE SEQUENCE [LARGE SCALE GENOMIC DNA]</scope>
    <source>
        <strain>cv. Nipponbare</strain>
    </source>
</reference>
<reference key="5">
    <citation type="journal article" date="2008" name="Nucleic Acids Res.">
        <title>The rice annotation project database (RAP-DB): 2008 update.</title>
        <authorList>
            <consortium name="The rice annotation project (RAP)"/>
        </authorList>
    </citation>
    <scope>GENOME REANNOTATION</scope>
    <source>
        <strain>cv. Nipponbare</strain>
    </source>
</reference>
<reference key="6">
    <citation type="journal article" date="2013" name="Rice">
        <title>Improvement of the Oryza sativa Nipponbare reference genome using next generation sequence and optical map data.</title>
        <authorList>
            <person name="Kawahara Y."/>
            <person name="de la Bastide M."/>
            <person name="Hamilton J.P."/>
            <person name="Kanamori H."/>
            <person name="McCombie W.R."/>
            <person name="Ouyang S."/>
            <person name="Schwartz D.C."/>
            <person name="Tanaka T."/>
            <person name="Wu J."/>
            <person name="Zhou S."/>
            <person name="Childs K.L."/>
            <person name="Davidson R.M."/>
            <person name="Lin H."/>
            <person name="Quesada-Ocampo L."/>
            <person name="Vaillancourt B."/>
            <person name="Sakai H."/>
            <person name="Lee S.S."/>
            <person name="Kim J."/>
            <person name="Numa H."/>
            <person name="Itoh T."/>
            <person name="Buell C.R."/>
            <person name="Matsumoto T."/>
        </authorList>
    </citation>
    <scope>GENOME REANNOTATION</scope>
    <source>
        <strain>cv. Nipponbare</strain>
    </source>
</reference>